<gene>
    <name type="primary">Cnn3</name>
</gene>
<accession>Q9DAW9</accession>
<accession>Q3TW23</accession>
<evidence type="ECO:0000250" key="1"/>
<evidence type="ECO:0000250" key="2">
    <source>
        <dbReference type="UniProtKB" id="Q15417"/>
    </source>
</evidence>
<evidence type="ECO:0000255" key="3">
    <source>
        <dbReference type="PROSITE-ProRule" id="PRU00044"/>
    </source>
</evidence>
<evidence type="ECO:0000256" key="4">
    <source>
        <dbReference type="SAM" id="MobiDB-lite"/>
    </source>
</evidence>
<evidence type="ECO:0000305" key="5"/>
<evidence type="ECO:0007744" key="6">
    <source>
    </source>
</evidence>
<name>CNN3_MOUSE</name>
<proteinExistence type="evidence at protein level"/>
<organism>
    <name type="scientific">Mus musculus</name>
    <name type="common">Mouse</name>
    <dbReference type="NCBI Taxonomy" id="10090"/>
    <lineage>
        <taxon>Eukaryota</taxon>
        <taxon>Metazoa</taxon>
        <taxon>Chordata</taxon>
        <taxon>Craniata</taxon>
        <taxon>Vertebrata</taxon>
        <taxon>Euteleostomi</taxon>
        <taxon>Mammalia</taxon>
        <taxon>Eutheria</taxon>
        <taxon>Euarchontoglires</taxon>
        <taxon>Glires</taxon>
        <taxon>Rodentia</taxon>
        <taxon>Myomorpha</taxon>
        <taxon>Muroidea</taxon>
        <taxon>Muridae</taxon>
        <taxon>Murinae</taxon>
        <taxon>Mus</taxon>
        <taxon>Mus</taxon>
    </lineage>
</organism>
<sequence length="330" mass="36429">MTHFNKGPSYGLSAEVKNKIASKYDQQAEEDLRNWIEEVTGLGIGTNFQLGLKDGIILCELINKLQPGSVKKVNESSLNWPQLENIGNFIKAIQAYGMKPHDIFEANDLFENGNMTQVQTTLVALAGLAKTKGFHTTIDIGVKYAEKQTRRFDEGKLKAGQSVIGLQMGTNKCASQAGMTAYGTRRHLYDPKMQTDKPFDQTTISLQMGTNKGASQAGMLAPGTRRDIYDQKLTLQPVDNSTISLQMGTNKVASQKGMSVYGLGRQVYDPKYCAAPTEPVIHNGSQGTGTNGSEISDSDYQAEYPDEYHGEYPDDYPREYQYGDDQGIDY</sequence>
<comment type="function">
    <text evidence="1">Thin filament-associated protein that is implicated in the regulation and modulation of smooth muscle contraction. It is capable of binding to actin, calmodulin and tropomyosin. The interaction of calponin with actin inhibits the actomyosin Mg-ATPase activity (By similarity).</text>
</comment>
<comment type="similarity">
    <text evidence="5">Belongs to the calponin family.</text>
</comment>
<reference key="1">
    <citation type="journal article" date="2005" name="Science">
        <title>The transcriptional landscape of the mammalian genome.</title>
        <authorList>
            <person name="Carninci P."/>
            <person name="Kasukawa T."/>
            <person name="Katayama S."/>
            <person name="Gough J."/>
            <person name="Frith M.C."/>
            <person name="Maeda N."/>
            <person name="Oyama R."/>
            <person name="Ravasi T."/>
            <person name="Lenhard B."/>
            <person name="Wells C."/>
            <person name="Kodzius R."/>
            <person name="Shimokawa K."/>
            <person name="Bajic V.B."/>
            <person name="Brenner S.E."/>
            <person name="Batalov S."/>
            <person name="Forrest A.R."/>
            <person name="Zavolan M."/>
            <person name="Davis M.J."/>
            <person name="Wilming L.G."/>
            <person name="Aidinis V."/>
            <person name="Allen J.E."/>
            <person name="Ambesi-Impiombato A."/>
            <person name="Apweiler R."/>
            <person name="Aturaliya R.N."/>
            <person name="Bailey T.L."/>
            <person name="Bansal M."/>
            <person name="Baxter L."/>
            <person name="Beisel K.W."/>
            <person name="Bersano T."/>
            <person name="Bono H."/>
            <person name="Chalk A.M."/>
            <person name="Chiu K.P."/>
            <person name="Choudhary V."/>
            <person name="Christoffels A."/>
            <person name="Clutterbuck D.R."/>
            <person name="Crowe M.L."/>
            <person name="Dalla E."/>
            <person name="Dalrymple B.P."/>
            <person name="de Bono B."/>
            <person name="Della Gatta G."/>
            <person name="di Bernardo D."/>
            <person name="Down T."/>
            <person name="Engstrom P."/>
            <person name="Fagiolini M."/>
            <person name="Faulkner G."/>
            <person name="Fletcher C.F."/>
            <person name="Fukushima T."/>
            <person name="Furuno M."/>
            <person name="Futaki S."/>
            <person name="Gariboldi M."/>
            <person name="Georgii-Hemming P."/>
            <person name="Gingeras T.R."/>
            <person name="Gojobori T."/>
            <person name="Green R.E."/>
            <person name="Gustincich S."/>
            <person name="Harbers M."/>
            <person name="Hayashi Y."/>
            <person name="Hensch T.K."/>
            <person name="Hirokawa N."/>
            <person name="Hill D."/>
            <person name="Huminiecki L."/>
            <person name="Iacono M."/>
            <person name="Ikeo K."/>
            <person name="Iwama A."/>
            <person name="Ishikawa T."/>
            <person name="Jakt M."/>
            <person name="Kanapin A."/>
            <person name="Katoh M."/>
            <person name="Kawasawa Y."/>
            <person name="Kelso J."/>
            <person name="Kitamura H."/>
            <person name="Kitano H."/>
            <person name="Kollias G."/>
            <person name="Krishnan S.P."/>
            <person name="Kruger A."/>
            <person name="Kummerfeld S.K."/>
            <person name="Kurochkin I.V."/>
            <person name="Lareau L.F."/>
            <person name="Lazarevic D."/>
            <person name="Lipovich L."/>
            <person name="Liu J."/>
            <person name="Liuni S."/>
            <person name="McWilliam S."/>
            <person name="Madan Babu M."/>
            <person name="Madera M."/>
            <person name="Marchionni L."/>
            <person name="Matsuda H."/>
            <person name="Matsuzawa S."/>
            <person name="Miki H."/>
            <person name="Mignone F."/>
            <person name="Miyake S."/>
            <person name="Morris K."/>
            <person name="Mottagui-Tabar S."/>
            <person name="Mulder N."/>
            <person name="Nakano N."/>
            <person name="Nakauchi H."/>
            <person name="Ng P."/>
            <person name="Nilsson R."/>
            <person name="Nishiguchi S."/>
            <person name="Nishikawa S."/>
            <person name="Nori F."/>
            <person name="Ohara O."/>
            <person name="Okazaki Y."/>
            <person name="Orlando V."/>
            <person name="Pang K.C."/>
            <person name="Pavan W.J."/>
            <person name="Pavesi G."/>
            <person name="Pesole G."/>
            <person name="Petrovsky N."/>
            <person name="Piazza S."/>
            <person name="Reed J."/>
            <person name="Reid J.F."/>
            <person name="Ring B.Z."/>
            <person name="Ringwald M."/>
            <person name="Rost B."/>
            <person name="Ruan Y."/>
            <person name="Salzberg S.L."/>
            <person name="Sandelin A."/>
            <person name="Schneider C."/>
            <person name="Schoenbach C."/>
            <person name="Sekiguchi K."/>
            <person name="Semple C.A."/>
            <person name="Seno S."/>
            <person name="Sessa L."/>
            <person name="Sheng Y."/>
            <person name="Shibata Y."/>
            <person name="Shimada H."/>
            <person name="Shimada K."/>
            <person name="Silva D."/>
            <person name="Sinclair B."/>
            <person name="Sperling S."/>
            <person name="Stupka E."/>
            <person name="Sugiura K."/>
            <person name="Sultana R."/>
            <person name="Takenaka Y."/>
            <person name="Taki K."/>
            <person name="Tammoja K."/>
            <person name="Tan S.L."/>
            <person name="Tang S."/>
            <person name="Taylor M.S."/>
            <person name="Tegner J."/>
            <person name="Teichmann S.A."/>
            <person name="Ueda H.R."/>
            <person name="van Nimwegen E."/>
            <person name="Verardo R."/>
            <person name="Wei C.L."/>
            <person name="Yagi K."/>
            <person name="Yamanishi H."/>
            <person name="Zabarovsky E."/>
            <person name="Zhu S."/>
            <person name="Zimmer A."/>
            <person name="Hide W."/>
            <person name="Bult C."/>
            <person name="Grimmond S.M."/>
            <person name="Teasdale R.D."/>
            <person name="Liu E.T."/>
            <person name="Brusic V."/>
            <person name="Quackenbush J."/>
            <person name="Wahlestedt C."/>
            <person name="Mattick J.S."/>
            <person name="Hume D.A."/>
            <person name="Kai C."/>
            <person name="Sasaki D."/>
            <person name="Tomaru Y."/>
            <person name="Fukuda S."/>
            <person name="Kanamori-Katayama M."/>
            <person name="Suzuki M."/>
            <person name="Aoki J."/>
            <person name="Arakawa T."/>
            <person name="Iida J."/>
            <person name="Imamura K."/>
            <person name="Itoh M."/>
            <person name="Kato T."/>
            <person name="Kawaji H."/>
            <person name="Kawagashira N."/>
            <person name="Kawashima T."/>
            <person name="Kojima M."/>
            <person name="Kondo S."/>
            <person name="Konno H."/>
            <person name="Nakano K."/>
            <person name="Ninomiya N."/>
            <person name="Nishio T."/>
            <person name="Okada M."/>
            <person name="Plessy C."/>
            <person name="Shibata K."/>
            <person name="Shiraki T."/>
            <person name="Suzuki S."/>
            <person name="Tagami M."/>
            <person name="Waki K."/>
            <person name="Watahiki A."/>
            <person name="Okamura-Oho Y."/>
            <person name="Suzuki H."/>
            <person name="Kawai J."/>
            <person name="Hayashizaki Y."/>
        </authorList>
    </citation>
    <scope>NUCLEOTIDE SEQUENCE [LARGE SCALE MRNA]</scope>
    <source>
        <strain>C57BL/6J</strain>
        <tissue>Amnion</tissue>
        <tissue>Liver</tissue>
        <tissue>Placenta</tissue>
        <tissue>Spinal ganglion</tissue>
    </source>
</reference>
<reference key="2">
    <citation type="journal article" date="2004" name="Genome Res.">
        <title>The status, quality, and expansion of the NIH full-length cDNA project: the Mammalian Gene Collection (MGC).</title>
        <authorList>
            <consortium name="The MGC Project Team"/>
        </authorList>
    </citation>
    <scope>NUCLEOTIDE SEQUENCE [LARGE SCALE MRNA]</scope>
    <source>
        <strain>C57BL/6J</strain>
        <tissue>Brain</tissue>
    </source>
</reference>
<reference key="3">
    <citation type="journal article" date="2007" name="Proc. Natl. Acad. Sci. U.S.A.">
        <title>Large-scale phosphorylation analysis of mouse liver.</title>
        <authorList>
            <person name="Villen J."/>
            <person name="Beausoleil S.A."/>
            <person name="Gerber S.A."/>
            <person name="Gygi S.P."/>
        </authorList>
    </citation>
    <scope>IDENTIFICATION BY MASS SPECTROMETRY [LARGE SCALE ANALYSIS]</scope>
    <source>
        <tissue>Liver</tissue>
    </source>
</reference>
<reference key="4">
    <citation type="journal article" date="2010" name="Cell">
        <title>A tissue-specific atlas of mouse protein phosphorylation and expression.</title>
        <authorList>
            <person name="Huttlin E.L."/>
            <person name="Jedrychowski M.P."/>
            <person name="Elias J.E."/>
            <person name="Goswami T."/>
            <person name="Rad R."/>
            <person name="Beausoleil S.A."/>
            <person name="Villen J."/>
            <person name="Haas W."/>
            <person name="Sowa M.E."/>
            <person name="Gygi S.P."/>
        </authorList>
    </citation>
    <scope>IDENTIFICATION BY MASS SPECTROMETRY [LARGE SCALE ANALYSIS]</scope>
    <source>
        <tissue>Brain</tissue>
        <tissue>Brown adipose tissue</tissue>
        <tissue>Heart</tissue>
        <tissue>Kidney</tissue>
        <tissue>Liver</tissue>
        <tissue>Lung</tissue>
        <tissue>Pancreas</tissue>
        <tissue>Spleen</tissue>
        <tissue>Testis</tissue>
    </source>
</reference>
<reference key="5">
    <citation type="journal article" date="2013" name="Mol. Cell">
        <title>SIRT5-mediated lysine desuccinylation impacts diverse metabolic pathways.</title>
        <authorList>
            <person name="Park J."/>
            <person name="Chen Y."/>
            <person name="Tishkoff D.X."/>
            <person name="Peng C."/>
            <person name="Tan M."/>
            <person name="Dai L."/>
            <person name="Xie Z."/>
            <person name="Zhang Y."/>
            <person name="Zwaans B.M."/>
            <person name="Skinner M.E."/>
            <person name="Lombard D.B."/>
            <person name="Zhao Y."/>
        </authorList>
    </citation>
    <scope>ACETYLATION [LARGE SCALE ANALYSIS] AT LYS-23</scope>
    <scope>IDENTIFICATION BY MASS SPECTROMETRY [LARGE SCALE ANALYSIS]</scope>
    <source>
        <tissue>Embryonic fibroblast</tissue>
    </source>
</reference>
<protein>
    <recommendedName>
        <fullName>Calponin-3</fullName>
    </recommendedName>
    <alternativeName>
        <fullName>Calponin, acidic isoform</fullName>
    </alternativeName>
</protein>
<dbReference type="EMBL" id="AK005460">
    <property type="protein sequence ID" value="BAB24051.1"/>
    <property type="molecule type" value="mRNA"/>
</dbReference>
<dbReference type="EMBL" id="AK051628">
    <property type="protein sequence ID" value="BAC34697.1"/>
    <property type="molecule type" value="mRNA"/>
</dbReference>
<dbReference type="EMBL" id="AK159555">
    <property type="protein sequence ID" value="BAE35180.1"/>
    <property type="molecule type" value="mRNA"/>
</dbReference>
<dbReference type="EMBL" id="AK159871">
    <property type="protein sequence ID" value="BAE35444.1"/>
    <property type="molecule type" value="mRNA"/>
</dbReference>
<dbReference type="EMBL" id="AK166578">
    <property type="protein sequence ID" value="BAE38867.1"/>
    <property type="molecule type" value="mRNA"/>
</dbReference>
<dbReference type="EMBL" id="AK167201">
    <property type="protein sequence ID" value="BAE39329.1"/>
    <property type="molecule type" value="mRNA"/>
</dbReference>
<dbReference type="EMBL" id="AK167613">
    <property type="protein sequence ID" value="BAE39666.1"/>
    <property type="molecule type" value="mRNA"/>
</dbReference>
<dbReference type="EMBL" id="AK169021">
    <property type="protein sequence ID" value="BAE40817.1"/>
    <property type="molecule type" value="mRNA"/>
</dbReference>
<dbReference type="EMBL" id="AK169098">
    <property type="protein sequence ID" value="BAE40881.1"/>
    <property type="molecule type" value="mRNA"/>
</dbReference>
<dbReference type="EMBL" id="AK169410">
    <property type="protein sequence ID" value="BAE41156.1"/>
    <property type="molecule type" value="mRNA"/>
</dbReference>
<dbReference type="EMBL" id="BC055711">
    <property type="protein sequence ID" value="AAH55711.1"/>
    <property type="molecule type" value="mRNA"/>
</dbReference>
<dbReference type="EMBL" id="BC085268">
    <property type="protein sequence ID" value="AAH85268.1"/>
    <property type="molecule type" value="mRNA"/>
</dbReference>
<dbReference type="CCDS" id="CCDS17802.1"/>
<dbReference type="RefSeq" id="NP_082320.1">
    <property type="nucleotide sequence ID" value="NM_028044.2"/>
</dbReference>
<dbReference type="SMR" id="Q9DAW9"/>
<dbReference type="BioGRID" id="215081">
    <property type="interactions" value="36"/>
</dbReference>
<dbReference type="FunCoup" id="Q9DAW9">
    <property type="interactions" value="932"/>
</dbReference>
<dbReference type="IntAct" id="Q9DAW9">
    <property type="interactions" value="3"/>
</dbReference>
<dbReference type="MINT" id="Q9DAW9"/>
<dbReference type="STRING" id="10090.ENSMUSP00000029773"/>
<dbReference type="GlyGen" id="Q9DAW9">
    <property type="glycosylation" value="2 sites, 1 N-linked glycan (1 site), 1 O-linked glycan (1 site)"/>
</dbReference>
<dbReference type="iPTMnet" id="Q9DAW9"/>
<dbReference type="PhosphoSitePlus" id="Q9DAW9"/>
<dbReference type="SwissPalm" id="Q9DAW9"/>
<dbReference type="jPOST" id="Q9DAW9"/>
<dbReference type="PaxDb" id="10090-ENSMUSP00000029773"/>
<dbReference type="PeptideAtlas" id="Q9DAW9"/>
<dbReference type="ProteomicsDB" id="285512"/>
<dbReference type="Pumba" id="Q9DAW9"/>
<dbReference type="Antibodypedia" id="4078">
    <property type="antibodies" value="226 antibodies from 34 providers"/>
</dbReference>
<dbReference type="DNASU" id="71994"/>
<dbReference type="Ensembl" id="ENSMUST00000029773.13">
    <property type="protein sequence ID" value="ENSMUSP00000029773.9"/>
    <property type="gene ID" value="ENSMUSG00000053931.12"/>
</dbReference>
<dbReference type="GeneID" id="71994"/>
<dbReference type="KEGG" id="mmu:71994"/>
<dbReference type="UCSC" id="uc008rdy.1">
    <property type="organism name" value="mouse"/>
</dbReference>
<dbReference type="AGR" id="MGI:1919244"/>
<dbReference type="CTD" id="1266"/>
<dbReference type="MGI" id="MGI:1919244">
    <property type="gene designation" value="Cnn3"/>
</dbReference>
<dbReference type="VEuPathDB" id="HostDB:ENSMUSG00000053931"/>
<dbReference type="eggNOG" id="KOG2046">
    <property type="taxonomic scope" value="Eukaryota"/>
</dbReference>
<dbReference type="GeneTree" id="ENSGT00940000154539"/>
<dbReference type="HOGENOM" id="CLU_055232_0_1_1"/>
<dbReference type="InParanoid" id="Q9DAW9"/>
<dbReference type="OMA" id="YHSEYQD"/>
<dbReference type="OrthoDB" id="21595at2759"/>
<dbReference type="PhylomeDB" id="Q9DAW9"/>
<dbReference type="TreeFam" id="TF313921"/>
<dbReference type="BioGRID-ORCS" id="71994">
    <property type="hits" value="5 hits in 76 CRISPR screens"/>
</dbReference>
<dbReference type="ChiTaRS" id="Cnn3">
    <property type="organism name" value="mouse"/>
</dbReference>
<dbReference type="PRO" id="PR:Q9DAW9"/>
<dbReference type="Proteomes" id="UP000000589">
    <property type="component" value="Chromosome 3"/>
</dbReference>
<dbReference type="RNAct" id="Q9DAW9">
    <property type="molecule type" value="protein"/>
</dbReference>
<dbReference type="Bgee" id="ENSMUSG00000053931">
    <property type="expression patterns" value="Expressed in pharyngeal arch 2 and 262 other cell types or tissues"/>
</dbReference>
<dbReference type="ExpressionAtlas" id="Q9DAW9">
    <property type="expression patterns" value="baseline and differential"/>
</dbReference>
<dbReference type="GO" id="GO:0015629">
    <property type="term" value="C:actin cytoskeleton"/>
    <property type="evidence" value="ECO:0007669"/>
    <property type="project" value="Ensembl"/>
</dbReference>
<dbReference type="GO" id="GO:0005829">
    <property type="term" value="C:cytosol"/>
    <property type="evidence" value="ECO:0007669"/>
    <property type="project" value="Ensembl"/>
</dbReference>
<dbReference type="GO" id="GO:0003779">
    <property type="term" value="F:actin binding"/>
    <property type="evidence" value="ECO:0007669"/>
    <property type="project" value="UniProtKB-KW"/>
</dbReference>
<dbReference type="GO" id="GO:0005516">
    <property type="term" value="F:calmodulin binding"/>
    <property type="evidence" value="ECO:0007669"/>
    <property type="project" value="UniProtKB-KW"/>
</dbReference>
<dbReference type="GO" id="GO:0031032">
    <property type="term" value="P:actomyosin structure organization"/>
    <property type="evidence" value="ECO:0007669"/>
    <property type="project" value="InterPro"/>
</dbReference>
<dbReference type="GO" id="GO:0030855">
    <property type="term" value="P:epithelial cell differentiation"/>
    <property type="evidence" value="ECO:0007669"/>
    <property type="project" value="Ensembl"/>
</dbReference>
<dbReference type="CDD" id="cd21284">
    <property type="entry name" value="CH_CNN3"/>
    <property type="match status" value="1"/>
</dbReference>
<dbReference type="FunFam" id="1.10.418.10:FF:000040">
    <property type="entry name" value="Calponin"/>
    <property type="match status" value="1"/>
</dbReference>
<dbReference type="Gene3D" id="1.10.418.10">
    <property type="entry name" value="Calponin-like domain"/>
    <property type="match status" value="1"/>
</dbReference>
<dbReference type="InterPro" id="IPR050606">
    <property type="entry name" value="Calponin-like"/>
</dbReference>
<dbReference type="InterPro" id="IPR001997">
    <property type="entry name" value="Calponin/LIMCH1"/>
</dbReference>
<dbReference type="InterPro" id="IPR000557">
    <property type="entry name" value="Calponin_repeat"/>
</dbReference>
<dbReference type="InterPro" id="IPR001715">
    <property type="entry name" value="CH_dom"/>
</dbReference>
<dbReference type="InterPro" id="IPR036872">
    <property type="entry name" value="CH_dom_sf"/>
</dbReference>
<dbReference type="InterPro" id="IPR003096">
    <property type="entry name" value="SM22_calponin"/>
</dbReference>
<dbReference type="PANTHER" id="PTHR47385">
    <property type="entry name" value="CALPONIN"/>
    <property type="match status" value="1"/>
</dbReference>
<dbReference type="PANTHER" id="PTHR47385:SF24">
    <property type="entry name" value="MUSCLE-SPECIFIC PROTEIN 20"/>
    <property type="match status" value="1"/>
</dbReference>
<dbReference type="Pfam" id="PF00402">
    <property type="entry name" value="Calponin"/>
    <property type="match status" value="3"/>
</dbReference>
<dbReference type="Pfam" id="PF00307">
    <property type="entry name" value="CH"/>
    <property type="match status" value="1"/>
</dbReference>
<dbReference type="PRINTS" id="PR00889">
    <property type="entry name" value="CALPONIN"/>
</dbReference>
<dbReference type="PRINTS" id="PR00888">
    <property type="entry name" value="SM22CALPONIN"/>
</dbReference>
<dbReference type="SMART" id="SM00033">
    <property type="entry name" value="CH"/>
    <property type="match status" value="1"/>
</dbReference>
<dbReference type="SUPFAM" id="SSF47576">
    <property type="entry name" value="Calponin-homology domain, CH-domain"/>
    <property type="match status" value="1"/>
</dbReference>
<dbReference type="PROSITE" id="PS01052">
    <property type="entry name" value="CALPONIN_1"/>
    <property type="match status" value="3"/>
</dbReference>
<dbReference type="PROSITE" id="PS51122">
    <property type="entry name" value="CALPONIN_2"/>
    <property type="match status" value="3"/>
</dbReference>
<dbReference type="PROSITE" id="PS50021">
    <property type="entry name" value="CH"/>
    <property type="match status" value="1"/>
</dbReference>
<keyword id="KW-0007">Acetylation</keyword>
<keyword id="KW-0009">Actin-binding</keyword>
<keyword id="KW-0112">Calmodulin-binding</keyword>
<keyword id="KW-0488">Methylation</keyword>
<keyword id="KW-1185">Reference proteome</keyword>
<keyword id="KW-0677">Repeat</keyword>
<feature type="chain" id="PRO_0000204777" description="Calponin-3">
    <location>
        <begin position="1"/>
        <end position="330"/>
    </location>
</feature>
<feature type="domain" description="Calponin-homology (CH)" evidence="3">
    <location>
        <begin position="26"/>
        <end position="130"/>
    </location>
</feature>
<feature type="repeat" description="Calponin-like 1">
    <location>
        <begin position="164"/>
        <end position="189"/>
    </location>
</feature>
<feature type="repeat" description="Calponin-like 2">
    <location>
        <begin position="204"/>
        <end position="229"/>
    </location>
</feature>
<feature type="repeat" description="Calponin-like 3">
    <location>
        <begin position="243"/>
        <end position="268"/>
    </location>
</feature>
<feature type="region of interest" description="Disordered" evidence="4">
    <location>
        <begin position="279"/>
        <end position="330"/>
    </location>
</feature>
<feature type="compositionally biased region" description="Basic and acidic residues" evidence="4">
    <location>
        <begin position="306"/>
        <end position="318"/>
    </location>
</feature>
<feature type="modified residue" description="N6-acetyllysine" evidence="6">
    <location>
        <position position="23"/>
    </location>
</feature>
<feature type="modified residue" description="N6-methyllysine" evidence="2">
    <location>
        <position position="158"/>
    </location>
</feature>